<keyword id="KW-0067">ATP-binding</keyword>
<keyword id="KW-0436">Ligase</keyword>
<keyword id="KW-0547">Nucleotide-binding</keyword>
<keyword id="KW-0648">Protein biosynthesis</keyword>
<reference key="1">
    <citation type="submission" date="2005-09" db="EMBL/GenBank/DDBJ databases">
        <title>Complete genome sequence of Clostridium kluyveri and comparative genomics of Clostridia species.</title>
        <authorList>
            <person name="Inui M."/>
            <person name="Nonaka H."/>
            <person name="Shinoda Y."/>
            <person name="Ikenaga Y."/>
            <person name="Abe M."/>
            <person name="Naito K."/>
            <person name="Vertes A.A."/>
            <person name="Yukawa H."/>
        </authorList>
    </citation>
    <scope>NUCLEOTIDE SEQUENCE [LARGE SCALE GENOMIC DNA]</scope>
    <source>
        <strain>NBRC 12016</strain>
    </source>
</reference>
<accession>B9DWL8</accession>
<dbReference type="EC" id="6.3.5.7" evidence="1"/>
<dbReference type="EMBL" id="AP009049">
    <property type="protein sequence ID" value="BAH08111.1"/>
    <property type="molecule type" value="Genomic_DNA"/>
</dbReference>
<dbReference type="SMR" id="B9DWL8"/>
<dbReference type="KEGG" id="ckr:CKR_3060"/>
<dbReference type="HOGENOM" id="CLU_009600_0_3_9"/>
<dbReference type="Proteomes" id="UP000007969">
    <property type="component" value="Chromosome"/>
</dbReference>
<dbReference type="GO" id="GO:0030956">
    <property type="term" value="C:glutamyl-tRNA(Gln) amidotransferase complex"/>
    <property type="evidence" value="ECO:0007669"/>
    <property type="project" value="InterPro"/>
</dbReference>
<dbReference type="GO" id="GO:0005524">
    <property type="term" value="F:ATP binding"/>
    <property type="evidence" value="ECO:0007669"/>
    <property type="project" value="UniProtKB-KW"/>
</dbReference>
<dbReference type="GO" id="GO:0050567">
    <property type="term" value="F:glutaminyl-tRNA synthase (glutamine-hydrolyzing) activity"/>
    <property type="evidence" value="ECO:0007669"/>
    <property type="project" value="UniProtKB-UniRule"/>
</dbReference>
<dbReference type="GO" id="GO:0006412">
    <property type="term" value="P:translation"/>
    <property type="evidence" value="ECO:0007669"/>
    <property type="project" value="UniProtKB-UniRule"/>
</dbReference>
<dbReference type="Gene3D" id="3.90.1300.10">
    <property type="entry name" value="Amidase signature (AS) domain"/>
    <property type="match status" value="1"/>
</dbReference>
<dbReference type="HAMAP" id="MF_00120">
    <property type="entry name" value="GatA"/>
    <property type="match status" value="1"/>
</dbReference>
<dbReference type="InterPro" id="IPR000120">
    <property type="entry name" value="Amidase"/>
</dbReference>
<dbReference type="InterPro" id="IPR023631">
    <property type="entry name" value="Amidase_dom"/>
</dbReference>
<dbReference type="InterPro" id="IPR036928">
    <property type="entry name" value="AS_sf"/>
</dbReference>
<dbReference type="InterPro" id="IPR004412">
    <property type="entry name" value="GatA"/>
</dbReference>
<dbReference type="NCBIfam" id="TIGR00132">
    <property type="entry name" value="gatA"/>
    <property type="match status" value="1"/>
</dbReference>
<dbReference type="PANTHER" id="PTHR11895:SF151">
    <property type="entry name" value="GLUTAMYL-TRNA(GLN) AMIDOTRANSFERASE SUBUNIT A"/>
    <property type="match status" value="1"/>
</dbReference>
<dbReference type="PANTHER" id="PTHR11895">
    <property type="entry name" value="TRANSAMIDASE"/>
    <property type="match status" value="1"/>
</dbReference>
<dbReference type="Pfam" id="PF01425">
    <property type="entry name" value="Amidase"/>
    <property type="match status" value="1"/>
</dbReference>
<dbReference type="SUPFAM" id="SSF75304">
    <property type="entry name" value="Amidase signature (AS) enzymes"/>
    <property type="match status" value="1"/>
</dbReference>
<evidence type="ECO:0000255" key="1">
    <source>
        <dbReference type="HAMAP-Rule" id="MF_00120"/>
    </source>
</evidence>
<sequence length="494" mass="54595">MNYMTITAHKLKDMIKNREISVEEIARTYLDRVDEVDGKLGAYLYVASEGLLQKAKELDKKISRGEILGKLFGIPISVKDNISVENMQNTCASRMLTGYISPYDAHVVEKIKFHQGIIIGKTNMDEFAMGSSTENSSIKLSRNPWDLNRVPGGSSGGSAISVAAGEAALSIGTDTGGSIRQPASFCGVVGLKPTYGRISRYGAVAFGSTLDQIGTIAADVEDCALLTECISGMDKRDFTTADMEVPKYSKSLSKDIKGMRIGIPKEYFGEGLNDKVRKSVEEAILVLKENGAQIKECSIPLSEYALAAYYIIASAEASSNLARFDGIRYGYRSKNFKDAVDIYFKSRSEGLGSEVKRRIVLGTYVLSEGYYDDYYKKALKVRKLIRNQFEDIMKEFHAIISPTCPTTAFKIDEKKEDVMAMYLSDIYTVPANITGIPAISIPCGMVDGLPVGLQIMSGYFRENILFNVAYSFEQSTKWHSITPDIQKEDRNYGI</sequence>
<comment type="function">
    <text evidence="1">Allows the formation of correctly charged Gln-tRNA(Gln) through the transamidation of misacylated Glu-tRNA(Gln) in organisms which lack glutaminyl-tRNA synthetase. The reaction takes place in the presence of glutamine and ATP through an activated gamma-phospho-Glu-tRNA(Gln).</text>
</comment>
<comment type="catalytic activity">
    <reaction evidence="1">
        <text>L-glutamyl-tRNA(Gln) + L-glutamine + ATP + H2O = L-glutaminyl-tRNA(Gln) + L-glutamate + ADP + phosphate + H(+)</text>
        <dbReference type="Rhea" id="RHEA:17521"/>
        <dbReference type="Rhea" id="RHEA-COMP:9681"/>
        <dbReference type="Rhea" id="RHEA-COMP:9684"/>
        <dbReference type="ChEBI" id="CHEBI:15377"/>
        <dbReference type="ChEBI" id="CHEBI:15378"/>
        <dbReference type="ChEBI" id="CHEBI:29985"/>
        <dbReference type="ChEBI" id="CHEBI:30616"/>
        <dbReference type="ChEBI" id="CHEBI:43474"/>
        <dbReference type="ChEBI" id="CHEBI:58359"/>
        <dbReference type="ChEBI" id="CHEBI:78520"/>
        <dbReference type="ChEBI" id="CHEBI:78521"/>
        <dbReference type="ChEBI" id="CHEBI:456216"/>
        <dbReference type="EC" id="6.3.5.7"/>
    </reaction>
</comment>
<comment type="subunit">
    <text evidence="1">Heterotrimer of A, B and C subunits.</text>
</comment>
<comment type="similarity">
    <text evidence="1">Belongs to the amidase family. GatA subfamily.</text>
</comment>
<feature type="chain" id="PRO_1000122476" description="Glutamyl-tRNA(Gln) amidotransferase subunit A">
    <location>
        <begin position="1"/>
        <end position="494"/>
    </location>
</feature>
<feature type="active site" description="Charge relay system" evidence="1">
    <location>
        <position position="79"/>
    </location>
</feature>
<feature type="active site" description="Charge relay system" evidence="1">
    <location>
        <position position="154"/>
    </location>
</feature>
<feature type="active site" description="Acyl-ester intermediate" evidence="1">
    <location>
        <position position="178"/>
    </location>
</feature>
<organism>
    <name type="scientific">Clostridium kluyveri (strain NBRC 12016)</name>
    <dbReference type="NCBI Taxonomy" id="583346"/>
    <lineage>
        <taxon>Bacteria</taxon>
        <taxon>Bacillati</taxon>
        <taxon>Bacillota</taxon>
        <taxon>Clostridia</taxon>
        <taxon>Eubacteriales</taxon>
        <taxon>Clostridiaceae</taxon>
        <taxon>Clostridium</taxon>
    </lineage>
</organism>
<proteinExistence type="inferred from homology"/>
<protein>
    <recommendedName>
        <fullName evidence="1">Glutamyl-tRNA(Gln) amidotransferase subunit A</fullName>
        <shortName evidence="1">Glu-ADT subunit A</shortName>
        <ecNumber evidence="1">6.3.5.7</ecNumber>
    </recommendedName>
</protein>
<gene>
    <name evidence="1" type="primary">gatA</name>
    <name type="ordered locus">CKR_3060</name>
</gene>
<name>GATA_CLOK1</name>